<accession>Q80W32</accession>
<reference key="1">
    <citation type="journal article" date="2004" name="Genome Res.">
        <title>The status, quality, and expansion of the NIH full-length cDNA project: the Mammalian Gene Collection (MGC).</title>
        <authorList>
            <consortium name="The MGC Project Team"/>
        </authorList>
    </citation>
    <scope>NUCLEOTIDE SEQUENCE [LARGE SCALE MRNA]</scope>
    <source>
        <tissue>Olfactory epithelium</tissue>
    </source>
</reference>
<reference key="2">
    <citation type="journal article" date="2014" name="G3 (Bethesda)">
        <title>IQ motif-containing G (Iqcg) is required for mouse spermiogenesis.</title>
        <authorList>
            <person name="Harris T.P."/>
            <person name="Schimenti K.J."/>
            <person name="Munroe R.J."/>
            <person name="Schimenti J.C."/>
        </authorList>
    </citation>
    <scope>FUNCTION</scope>
    <scope>DISRUPTION PHENOTYPE</scope>
    <scope>MISCELLANEOUS</scope>
    <scope>TISSUE SPECIFICITY</scope>
</reference>
<reference key="3">
    <citation type="journal article" date="2014" name="Nat. Commun.">
        <title>Functional and molecular features of the calmodulin-interacting protein IQCG required for haematopoiesis in zebrafish.</title>
        <authorList>
            <person name="Chen L.T."/>
            <person name="Liang W.X."/>
            <person name="Chen S."/>
            <person name="Li R.K."/>
            <person name="Tan J.L."/>
            <person name="Xu P.F."/>
            <person name="Luo L.F."/>
            <person name="Wang L."/>
            <person name="Yu S.H."/>
            <person name="Meng G."/>
            <person name="Li K.K."/>
            <person name="Liu T.X."/>
            <person name="Chen Z."/>
            <person name="Chen S.J."/>
        </authorList>
    </citation>
    <scope>IDENTIFICATION IN A COMPLEX WITH CAMK4 AND HSP70</scope>
</reference>
<reference key="4">
    <citation type="journal article" date="2014" name="PLoS ONE">
        <title>Iqcg is essential for sperm flagellum formation in mice.</title>
        <authorList>
            <person name="Li R.K."/>
            <person name="Tan J.L."/>
            <person name="Chen L.T."/>
            <person name="Feng J.S."/>
            <person name="Liang W.X."/>
            <person name="Guo X.J."/>
            <person name="Liu P."/>
            <person name="Chen Z."/>
            <person name="Sha J.H."/>
            <person name="Wang Y.F."/>
            <person name="Chen S.J."/>
        </authorList>
    </citation>
    <scope>FUNCTION</scope>
    <scope>SUBCELLULAR LOCATION</scope>
    <scope>DISRUPTION PHENOTYPE</scope>
    <scope>TISSUE SPECIFICITY</scope>
    <scope>INTERACTION WITH CALMODULIN</scope>
</reference>
<reference key="5">
    <citation type="journal article" date="2022" name="Front. Cell Dev. Biol.">
        <title>TMPRSS12 Functions in Meiosis and Spermiogenesis and Is Required for Male Fertility in Mice.</title>
        <authorList>
            <person name="Zhang J."/>
            <person name="Zhou X."/>
            <person name="Wan D."/>
            <person name="Yu L."/>
            <person name="Chen X."/>
            <person name="Yan T."/>
            <person name="Wu Z."/>
            <person name="Zheng M."/>
            <person name="Zhu F."/>
            <person name="Zhu H."/>
        </authorList>
    </citation>
    <scope>TISSUE SPECIFICITY</scope>
</reference>
<sequence>MDEEEVEVVESPSEVLQPEVTVVVTGEPPEAAEEDLDYEEEEETSPEVIETLSLLDVLRVSAVMEDVIDQLSILGYIIPVQYERRQSLTQKASHEGASMITTTPKKSTSLLTKEKSMMAENKQRGQDFTFKKPTKQTMMTLETLKKIQNDRQYFSDVIANAMMEMQDSGSFTSLLKALGKERDSKMNFHDVITREEKGRKQIKTLQKQLLDVKRERQMQVQNGNEYIAHLRDQLQEMKAKTNLENLYMKRNAELQISQTQKKCNRAEELLLEEIEKLRMKTEEENRVHTEIEMFLKKQQQKLEEKLEFWMEKFDKDTEAKQNELNALKAAKASDLVHLQDLAKMIREYEQVIIEDRIEKEKTRKKLEQDDLELRSIVKLQAWWRGSVVRKEIGNFKMPKKDKDDSKDSKGKEKEKRRKK</sequence>
<evidence type="ECO:0000250" key="1">
    <source>
        <dbReference type="UniProtKB" id="A3KQH2"/>
    </source>
</evidence>
<evidence type="ECO:0000250" key="2">
    <source>
        <dbReference type="UniProtKB" id="A8HQ54"/>
    </source>
</evidence>
<evidence type="ECO:0000250" key="3">
    <source>
        <dbReference type="UniProtKB" id="Q9H095"/>
    </source>
</evidence>
<evidence type="ECO:0000255" key="4">
    <source>
        <dbReference type="PROSITE-ProRule" id="PRU00116"/>
    </source>
</evidence>
<evidence type="ECO:0000256" key="5">
    <source>
        <dbReference type="SAM" id="MobiDB-lite"/>
    </source>
</evidence>
<evidence type="ECO:0000269" key="6">
    <source>
    </source>
</evidence>
<evidence type="ECO:0000269" key="7">
    <source>
    </source>
</evidence>
<evidence type="ECO:0000269" key="8">
    <source>
    </source>
</evidence>
<evidence type="ECO:0000305" key="9"/>
<evidence type="ECO:0000305" key="10">
    <source>
    </source>
</evidence>
<keyword id="KW-0112">Calmodulin-binding</keyword>
<keyword id="KW-0966">Cell projection</keyword>
<keyword id="KW-0969">Cilium</keyword>
<keyword id="KW-0963">Cytoplasm</keyword>
<keyword id="KW-0206">Cytoskeleton</keyword>
<keyword id="KW-0221">Differentiation</keyword>
<keyword id="KW-0282">Flagellum</keyword>
<keyword id="KW-1185">Reference proteome</keyword>
<keyword id="KW-0744">Spermatogenesis</keyword>
<protein>
    <recommendedName>
        <fullName evidence="2">Dynein regulatory complex protein 9</fullName>
    </recommendedName>
    <alternativeName>
        <fullName>IQ domain-containing protein G</fullName>
    </alternativeName>
</protein>
<name>DRC9_MOUSE</name>
<organism>
    <name type="scientific">Mus musculus</name>
    <name type="common">Mouse</name>
    <dbReference type="NCBI Taxonomy" id="10090"/>
    <lineage>
        <taxon>Eukaryota</taxon>
        <taxon>Metazoa</taxon>
        <taxon>Chordata</taxon>
        <taxon>Craniata</taxon>
        <taxon>Vertebrata</taxon>
        <taxon>Euteleostomi</taxon>
        <taxon>Mammalia</taxon>
        <taxon>Eutheria</taxon>
        <taxon>Euarchontoglires</taxon>
        <taxon>Glires</taxon>
        <taxon>Rodentia</taxon>
        <taxon>Myomorpha</taxon>
        <taxon>Muroidea</taxon>
        <taxon>Muridae</taxon>
        <taxon>Murinae</taxon>
        <taxon>Mus</taxon>
        <taxon>Mus</taxon>
    </lineage>
</organism>
<feature type="chain" id="PRO_0000282563" description="Dynein regulatory complex protein 9">
    <location>
        <begin position="1"/>
        <end position="419"/>
    </location>
</feature>
<feature type="domain" description="IQ" evidence="4">
    <location>
        <begin position="372"/>
        <end position="401"/>
    </location>
</feature>
<feature type="region of interest" description="Disordered" evidence="5">
    <location>
        <begin position="25"/>
        <end position="45"/>
    </location>
</feature>
<feature type="region of interest" description="Disordered" evidence="5">
    <location>
        <begin position="394"/>
        <end position="419"/>
    </location>
</feature>
<feature type="compositionally biased region" description="Acidic residues" evidence="5">
    <location>
        <begin position="30"/>
        <end position="45"/>
    </location>
</feature>
<feature type="compositionally biased region" description="Basic and acidic residues" evidence="5">
    <location>
        <begin position="394"/>
        <end position="413"/>
    </location>
</feature>
<gene>
    <name type="primary">Iqcg</name>
    <name evidence="2" type="synonym">Drc9</name>
</gene>
<comment type="function">
    <text evidence="1 2 6 7">Component of the nexin-dynein regulatory complex (N-DRC), a key regulator of ciliary/flagellar motility which maintains the alignment and integrity of the distal axoneme and regulates microtubule sliding in motile axonemes. Binds calmodulin when cellular Ca(2+) levels are low and thereby contributes to the regulation of calcium and calmodulin-dependent protein kinase IV (CAMK4) activity; contributes to the regulation of CAMK4 signaling cascades (By similarity). Required for normal axoneme assembly in sperm flagella, normal sperm tail formation and for male fertility (PubMed:24362311, PubMed:24849454).</text>
</comment>
<comment type="subunit">
    <text evidence="2 3 7 10">Component of the nexin-dynein regulatory complex (N-DRC) (By similarity). Interacts (via IQ domain) with CALM when calcium levels are low. Does not interact with CALM in the presence of Ca(2+) (PubMed:24849454). Interacts with the HSP70 proteins HSPA1L and HSPA8 (By similarity). May form a complex with CAMK4 and HSP70 (Probable).</text>
</comment>
<comment type="subcellular location">
    <subcellularLocation>
        <location evidence="7">Cytoplasm</location>
    </subcellularLocation>
    <subcellularLocation>
        <location evidence="7">Cell projection</location>
        <location evidence="7">Cilium</location>
        <location evidence="7">Flagellum</location>
    </subcellularLocation>
    <subcellularLocation>
        <location evidence="7">Cell projection</location>
        <location evidence="7">Cilium</location>
    </subcellularLocation>
    <subcellularLocation>
        <location evidence="7">Cytoplasm</location>
        <location evidence="7">Cytoskeleton</location>
    </subcellularLocation>
    <subcellularLocation>
        <location evidence="2">Cytoplasm</location>
        <location evidence="2">Cytoskeleton</location>
        <location evidence="2">Flagellum axoneme</location>
    </subcellularLocation>
    <text evidence="7">First detected in the cytoplasm of pachytene spermatocytes. Colocalizes with alpha-tubulin at the manchette in developing spermatids. Detected in the flagellum of mature testicular spermatozoa, and in the flagellum and post-acrosomal region of the head of epididymal spermatozoa. Detected in cilia in trachea and oviduct.</text>
</comment>
<comment type="tissue specificity">
    <text evidence="6 7 8">Expressed in the testes (at protein level) (PubMed:24362311, PubMed:24849454, PubMed:35547804). Also detected in oviduct (at protein level) (PubMed:24849454). Also detected in the trachea (PubMed:24849454).</text>
</comment>
<comment type="developmental stage">
    <text evidence="6">First detected in testis 17 days after birth when pachytene spermatocytes are seen in testes. Expression remains high during the first three weeks after birth and in adults (at protein level).</text>
</comment>
<comment type="domain">
    <text evidence="3">The IQ domain mediates interaction with calmodulin when cellular Ca(2+) levels are low.</text>
</comment>
<comment type="disruption phenotype">
    <text evidence="6 7">No obvious phenotype, except complete male sterility (PubMed:24362311, PubMed:24849454). Female fertility is not altered (PubMed:24849454).</text>
</comment>
<comment type="miscellaneous">
    <text evidence="6">Early spermiogenesis defective 12d (esgd12d) is caused by mutations disrupting this gene. Affected male mice display complete loss of fertility; their sperm cells lack tails and are nonmotile.</text>
</comment>
<comment type="similarity">
    <text evidence="9">Belongs to the DRC9 family.</text>
</comment>
<proteinExistence type="evidence at protein level"/>
<dbReference type="EMBL" id="BC049990">
    <property type="protein sequence ID" value="AAH49990.1"/>
    <property type="molecule type" value="mRNA"/>
</dbReference>
<dbReference type="CCDS" id="CCDS37316.1"/>
<dbReference type="RefSeq" id="NP_848465.1">
    <property type="nucleotide sequence ID" value="NM_178378.3"/>
</dbReference>
<dbReference type="RefSeq" id="XP_011244306.1">
    <property type="nucleotide sequence ID" value="XM_011246004.4"/>
</dbReference>
<dbReference type="SMR" id="Q80W32"/>
<dbReference type="FunCoup" id="Q80W32">
    <property type="interactions" value="214"/>
</dbReference>
<dbReference type="STRING" id="10090.ENSMUSP00000110752"/>
<dbReference type="iPTMnet" id="Q80W32"/>
<dbReference type="PhosphoSitePlus" id="Q80W32"/>
<dbReference type="jPOST" id="Q80W32"/>
<dbReference type="PaxDb" id="10090-ENSMUSP00000110752"/>
<dbReference type="ProteomicsDB" id="301666"/>
<dbReference type="Antibodypedia" id="51727">
    <property type="antibodies" value="66 antibodies from 10 providers"/>
</dbReference>
<dbReference type="DNASU" id="69707"/>
<dbReference type="Ensembl" id="ENSMUST00000115100.9">
    <property type="protein sequence ID" value="ENSMUSP00000110752.2"/>
    <property type="gene ID" value="ENSMUSG00000035578.17"/>
</dbReference>
<dbReference type="GeneID" id="69707"/>
<dbReference type="KEGG" id="mmu:69707"/>
<dbReference type="UCSC" id="uc007yzt.2">
    <property type="organism name" value="mouse"/>
</dbReference>
<dbReference type="AGR" id="MGI:1916957"/>
<dbReference type="CTD" id="84223"/>
<dbReference type="MGI" id="MGI:1916957">
    <property type="gene designation" value="Iqcg"/>
</dbReference>
<dbReference type="VEuPathDB" id="HostDB:ENSMUSG00000035578"/>
<dbReference type="eggNOG" id="ENOG502QQR7">
    <property type="taxonomic scope" value="Eukaryota"/>
</dbReference>
<dbReference type="GeneTree" id="ENSGT00730000111263"/>
<dbReference type="HOGENOM" id="CLU_052522_0_0_1"/>
<dbReference type="InParanoid" id="Q80W32"/>
<dbReference type="OMA" id="ESKMHFY"/>
<dbReference type="OrthoDB" id="10254713at2759"/>
<dbReference type="PhylomeDB" id="Q80W32"/>
<dbReference type="TreeFam" id="TF326203"/>
<dbReference type="BioGRID-ORCS" id="69707">
    <property type="hits" value="3 hits in 76 CRISPR screens"/>
</dbReference>
<dbReference type="ChiTaRS" id="Iqcg">
    <property type="organism name" value="mouse"/>
</dbReference>
<dbReference type="PRO" id="PR:Q80W32"/>
<dbReference type="Proteomes" id="UP000000589">
    <property type="component" value="Chromosome 16"/>
</dbReference>
<dbReference type="RNAct" id="Q80W32">
    <property type="molecule type" value="protein"/>
</dbReference>
<dbReference type="Bgee" id="ENSMUSG00000035578">
    <property type="expression patterns" value="Expressed in spermatocyte and 91 other cell types or tissues"/>
</dbReference>
<dbReference type="GO" id="GO:0015629">
    <property type="term" value="C:actin cytoskeleton"/>
    <property type="evidence" value="ECO:0007669"/>
    <property type="project" value="Ensembl"/>
</dbReference>
<dbReference type="GO" id="GO:0005737">
    <property type="term" value="C:cytoplasm"/>
    <property type="evidence" value="ECO:0000314"/>
    <property type="project" value="UniProtKB"/>
</dbReference>
<dbReference type="GO" id="GO:0005829">
    <property type="term" value="C:cytosol"/>
    <property type="evidence" value="ECO:0000314"/>
    <property type="project" value="MGI"/>
</dbReference>
<dbReference type="GO" id="GO:0002177">
    <property type="term" value="C:manchette"/>
    <property type="evidence" value="ECO:0000314"/>
    <property type="project" value="UniProtKB"/>
</dbReference>
<dbReference type="GO" id="GO:0031514">
    <property type="term" value="C:motile cilium"/>
    <property type="evidence" value="ECO:0000314"/>
    <property type="project" value="UniProtKB"/>
</dbReference>
<dbReference type="GO" id="GO:0036126">
    <property type="term" value="C:sperm flagellum"/>
    <property type="evidence" value="ECO:0000314"/>
    <property type="project" value="UniProtKB"/>
</dbReference>
<dbReference type="GO" id="GO:0005516">
    <property type="term" value="F:calmodulin binding"/>
    <property type="evidence" value="ECO:0000314"/>
    <property type="project" value="UniProtKB"/>
</dbReference>
<dbReference type="GO" id="GO:0030544">
    <property type="term" value="F:Hsp70 protein binding"/>
    <property type="evidence" value="ECO:0007669"/>
    <property type="project" value="Ensembl"/>
</dbReference>
<dbReference type="GO" id="GO:0007288">
    <property type="term" value="P:sperm axoneme assembly"/>
    <property type="evidence" value="ECO:0000315"/>
    <property type="project" value="UniProtKB"/>
</dbReference>
<dbReference type="GO" id="GO:0007286">
    <property type="term" value="P:spermatid development"/>
    <property type="evidence" value="ECO:0000315"/>
    <property type="project" value="UniProtKB"/>
</dbReference>
<dbReference type="CDD" id="cd23766">
    <property type="entry name" value="IQCG"/>
    <property type="match status" value="1"/>
</dbReference>
<dbReference type="InterPro" id="IPR000048">
    <property type="entry name" value="IQ_motif_EF-hand-BS"/>
</dbReference>
<dbReference type="InterPro" id="IPR042618">
    <property type="entry name" value="IQCG"/>
</dbReference>
<dbReference type="PANTHER" id="PTHR14871">
    <property type="entry name" value="DYNEIN REGULATORY COMPLEX PROTEIN 9"/>
    <property type="match status" value="1"/>
</dbReference>
<dbReference type="PANTHER" id="PTHR14871:SF1">
    <property type="entry name" value="DYNEIN REGULATORY COMPLEX PROTEIN 9"/>
    <property type="match status" value="1"/>
</dbReference>
<dbReference type="Pfam" id="PF00612">
    <property type="entry name" value="IQ"/>
    <property type="match status" value="1"/>
</dbReference>
<dbReference type="PROSITE" id="PS50096">
    <property type="entry name" value="IQ"/>
    <property type="match status" value="1"/>
</dbReference>